<organism>
    <name type="scientific">Flammulina velutipes</name>
    <name type="common">Agaricus velutipes</name>
    <dbReference type="NCBI Taxonomy" id="38945"/>
    <lineage>
        <taxon>Eukaryota</taxon>
        <taxon>Fungi</taxon>
        <taxon>Dikarya</taxon>
        <taxon>Basidiomycota</taxon>
        <taxon>Agaricomycotina</taxon>
        <taxon>Agaricomycetes</taxon>
        <taxon>Agaricomycetidae</taxon>
        <taxon>Agaricales</taxon>
        <taxon>Marasmiineae</taxon>
        <taxon>Physalacriaceae</taxon>
        <taxon>Flammulina</taxon>
    </lineage>
</organism>
<keyword id="KW-0002">3D-structure</keyword>
<keyword id="KW-0007">Acetylation</keyword>
<keyword id="KW-0903">Direct protein sequencing</keyword>
<keyword id="KW-0430">Lectin</keyword>
<name>FVE_FLAVE</name>
<protein>
    <recommendedName>
        <fullName>Immunomodulatory protein FIP-Fve</fullName>
    </recommendedName>
</protein>
<feature type="chain" id="PRO_0000087390" description="Immunomodulatory protein FIP-Fve">
    <location>
        <begin position="1"/>
        <end position="114"/>
    </location>
</feature>
<feature type="modified residue" description="N-acetylserine" evidence="1">
    <location>
        <position position="1"/>
    </location>
</feature>
<feature type="helix" evidence="3">
    <location>
        <begin position="2"/>
        <end position="13"/>
    </location>
</feature>
<feature type="strand" evidence="3">
    <location>
        <begin position="15"/>
        <end position="19"/>
    </location>
</feature>
<feature type="strand" evidence="3">
    <location>
        <begin position="23"/>
        <end position="26"/>
    </location>
</feature>
<feature type="strand" evidence="3">
    <location>
        <begin position="32"/>
        <end position="40"/>
    </location>
</feature>
<feature type="strand" evidence="3">
    <location>
        <begin position="48"/>
        <end position="53"/>
    </location>
</feature>
<feature type="strand" evidence="3">
    <location>
        <begin position="56"/>
        <end position="61"/>
    </location>
</feature>
<feature type="strand" evidence="3">
    <location>
        <begin position="72"/>
        <end position="75"/>
    </location>
</feature>
<feature type="helix" evidence="3">
    <location>
        <begin position="76"/>
        <end position="78"/>
    </location>
</feature>
<feature type="turn" evidence="3">
    <location>
        <begin position="79"/>
        <end position="82"/>
    </location>
</feature>
<feature type="strand" evidence="3">
    <location>
        <begin position="91"/>
        <end position="96"/>
    </location>
</feature>
<feature type="strand" evidence="3">
    <location>
        <begin position="98"/>
        <end position="100"/>
    </location>
</feature>
<feature type="strand" evidence="3">
    <location>
        <begin position="105"/>
        <end position="111"/>
    </location>
</feature>
<reference key="1">
    <citation type="journal article" date="1995" name="Eur. J. Biochem.">
        <title>A new fungal immunomodulatory protein, FIP-fve isolated from the edible mushroom, Flammulina velutipes and its complete amino acid sequence.</title>
        <authorList>
            <person name="Ko J.-L."/>
            <person name="Hsu C.-I."/>
            <person name="Lin R.-H."/>
            <person name="Kao C.-L."/>
            <person name="Lin J.-Y."/>
        </authorList>
    </citation>
    <scope>PROTEIN SEQUENCE</scope>
    <scope>ACETYLATION AT SER-1</scope>
</reference>
<reference key="2">
    <citation type="journal article" date="2003" name="J. Mol. Biol.">
        <title>A 1.7A structure of Fve, a member of the new fungal immunomodulatory protein family.</title>
        <authorList>
            <person name="Paaventhan P."/>
            <person name="Joseph J.S."/>
            <person name="Seow S.V."/>
            <person name="Vaday S."/>
            <person name="Robinson H."/>
            <person name="Chua K.Y."/>
            <person name="Kolatkar P.R."/>
        </authorList>
    </citation>
    <scope>X-RAY CRYSTALLOGRAPHY (1.7 ANGSTROMS)</scope>
</reference>
<proteinExistence type="evidence at protein level"/>
<sequence>SATSLTFQLAYLVKKIDFDYTPNWGRGTPSSYIDNLTFPKVLTDKKYSYRVVVNGSDLGVESNFAVTPSGGQTINFLQYNKGYGVADTKTIQVFVVIPDTGNSEEYIIAEWKKT</sequence>
<accession>P80412</accession>
<evidence type="ECO:0000269" key="1">
    <source>
    </source>
</evidence>
<evidence type="ECO:0000305" key="2"/>
<evidence type="ECO:0007829" key="3">
    <source>
        <dbReference type="PDB" id="1OSY"/>
    </source>
</evidence>
<dbReference type="PIR" id="S69147">
    <property type="entry name" value="S69147"/>
</dbReference>
<dbReference type="PDB" id="1OSY">
    <property type="method" value="X-ray"/>
    <property type="resolution" value="1.70 A"/>
    <property type="chains" value="A/B=1-114"/>
</dbReference>
<dbReference type="PDBsum" id="1OSY"/>
<dbReference type="SMR" id="P80412"/>
<dbReference type="UniLectin" id="P80412"/>
<dbReference type="iPTMnet" id="P80412"/>
<dbReference type="EvolutionaryTrace" id="P80412"/>
<dbReference type="GO" id="GO:0030246">
    <property type="term" value="F:carbohydrate binding"/>
    <property type="evidence" value="ECO:0007669"/>
    <property type="project" value="UniProtKB-KW"/>
</dbReference>
<dbReference type="GO" id="GO:0002682">
    <property type="term" value="P:regulation of immune system process"/>
    <property type="evidence" value="ECO:0007669"/>
    <property type="project" value="InterPro"/>
</dbReference>
<dbReference type="Gene3D" id="2.60.40.1790">
    <property type="entry name" value="Fungal immunomodulatory protein Fve"/>
    <property type="match status" value="1"/>
</dbReference>
<dbReference type="InterPro" id="IPR036344">
    <property type="entry name" value="FIP_sf"/>
</dbReference>
<dbReference type="InterPro" id="IPR053742">
    <property type="entry name" value="Fungal_ImmunoLectin_sf"/>
</dbReference>
<dbReference type="InterPro" id="IPR015339">
    <property type="entry name" value="Immunomodulatory_FIP-Fve_fun"/>
</dbReference>
<dbReference type="Pfam" id="PF09259">
    <property type="entry name" value="Fve"/>
    <property type="match status" value="1"/>
</dbReference>
<dbReference type="SUPFAM" id="SSF101542">
    <property type="entry name" value="Fungal immunomodulatory protein, FIP"/>
    <property type="match status" value="1"/>
</dbReference>
<comment type="function">
    <text>Lectin with specificity for complex cell-surface carbohydrates. Possesses immunomodulatory activity, stimulates lymphocyte mitogenesis, suppresses systemic anaphylaxis reactions and edema, enhances transcription of IL-2, IFN-gamma and TNF-alpha and hemagglutinates red blood cells.</text>
</comment>
<comment type="subunit">
    <text>Homodimer.</text>
</comment>
<comment type="similarity">
    <text evidence="2">Belongs to the fungal immunomodulatory protein (FIP) family.</text>
</comment>